<dbReference type="EC" id="2.7.11.13" evidence="11"/>
<dbReference type="EMBL" id="D26180">
    <property type="protein sequence ID" value="BAA05168.1"/>
    <property type="molecule type" value="mRNA"/>
</dbReference>
<dbReference type="EMBL" id="L35634">
    <property type="protein sequence ID" value="AAL31374.1"/>
    <property type="molecule type" value="mRNA"/>
</dbReference>
<dbReference type="EMBL" id="BC061836">
    <property type="protein sequence ID" value="AAH61836.1"/>
    <property type="molecule type" value="mRNA"/>
</dbReference>
<dbReference type="PIR" id="JC2130">
    <property type="entry name" value="JC2130"/>
</dbReference>
<dbReference type="RefSeq" id="NP_058871.2">
    <property type="nucleotide sequence ID" value="NM_017175.2"/>
</dbReference>
<dbReference type="SMR" id="Q63433"/>
<dbReference type="BioGRID" id="248010">
    <property type="interactions" value="1"/>
</dbReference>
<dbReference type="DIP" id="DIP-60097N"/>
<dbReference type="FunCoup" id="Q63433">
    <property type="interactions" value="2305"/>
</dbReference>
<dbReference type="IntAct" id="Q63433">
    <property type="interactions" value="9"/>
</dbReference>
<dbReference type="STRING" id="10116.ENSRNOP00000005770"/>
<dbReference type="GlyGen" id="Q63433">
    <property type="glycosylation" value="1 site"/>
</dbReference>
<dbReference type="iPTMnet" id="Q63433"/>
<dbReference type="PhosphoSitePlus" id="Q63433"/>
<dbReference type="jPOST" id="Q63433"/>
<dbReference type="PaxDb" id="10116-ENSRNOP00000005770"/>
<dbReference type="Ensembl" id="ENSRNOT00000005770.5">
    <property type="protein sequence ID" value="ENSRNOP00000005770.4"/>
    <property type="gene ID" value="ENSRNOG00000004131.7"/>
</dbReference>
<dbReference type="GeneID" id="29355"/>
<dbReference type="KEGG" id="rno:29355"/>
<dbReference type="AGR" id="RGD:69308"/>
<dbReference type="CTD" id="5585"/>
<dbReference type="RGD" id="69308">
    <property type="gene designation" value="Pkn1"/>
</dbReference>
<dbReference type="eggNOG" id="KOG0694">
    <property type="taxonomic scope" value="Eukaryota"/>
</dbReference>
<dbReference type="GeneTree" id="ENSGT00940000154990"/>
<dbReference type="HOGENOM" id="CLU_000288_132_1_1"/>
<dbReference type="InParanoid" id="Q63433"/>
<dbReference type="OrthoDB" id="63267at2759"/>
<dbReference type="BRENDA" id="2.7.11.13">
    <property type="organism ID" value="5301"/>
</dbReference>
<dbReference type="Reactome" id="R-RNO-5625740">
    <property type="pathway name" value="RHO GTPases activate PKNs"/>
</dbReference>
<dbReference type="Reactome" id="R-RNO-5625886">
    <property type="pathway name" value="Activated PKN1 stimulates transcription of AR (androgen receptor) regulated genes KLK2 and KLK3"/>
</dbReference>
<dbReference type="Reactome" id="R-RNO-8980692">
    <property type="pathway name" value="RHOA GTPase cycle"/>
</dbReference>
<dbReference type="Reactome" id="R-RNO-9013026">
    <property type="pathway name" value="RHOB GTPase cycle"/>
</dbReference>
<dbReference type="Reactome" id="R-RNO-9013149">
    <property type="pathway name" value="RAC1 GTPase cycle"/>
</dbReference>
<dbReference type="PRO" id="PR:Q63433"/>
<dbReference type="Proteomes" id="UP000002494">
    <property type="component" value="Chromosome 19"/>
</dbReference>
<dbReference type="Bgee" id="ENSRNOG00000004131">
    <property type="expression patterns" value="Expressed in spleen and 19 other cell types or tissues"/>
</dbReference>
<dbReference type="GO" id="GO:0032154">
    <property type="term" value="C:cleavage furrow"/>
    <property type="evidence" value="ECO:0000250"/>
    <property type="project" value="UniProtKB"/>
</dbReference>
<dbReference type="GO" id="GO:0005737">
    <property type="term" value="C:cytoplasm"/>
    <property type="evidence" value="ECO:0000250"/>
    <property type="project" value="UniProtKB"/>
</dbReference>
<dbReference type="GO" id="GO:0031410">
    <property type="term" value="C:cytoplasmic vesicle"/>
    <property type="evidence" value="ECO:0000266"/>
    <property type="project" value="RGD"/>
</dbReference>
<dbReference type="GO" id="GO:0005768">
    <property type="term" value="C:endosome"/>
    <property type="evidence" value="ECO:0000250"/>
    <property type="project" value="UniProtKB"/>
</dbReference>
<dbReference type="GO" id="GO:0030496">
    <property type="term" value="C:midbody"/>
    <property type="evidence" value="ECO:0000250"/>
    <property type="project" value="UniProtKB"/>
</dbReference>
<dbReference type="GO" id="GO:0005634">
    <property type="term" value="C:nucleus"/>
    <property type="evidence" value="ECO:0000250"/>
    <property type="project" value="UniProtKB"/>
</dbReference>
<dbReference type="GO" id="GO:0032991">
    <property type="term" value="C:protein-containing complex"/>
    <property type="evidence" value="ECO:0000266"/>
    <property type="project" value="RGD"/>
</dbReference>
<dbReference type="GO" id="GO:0005524">
    <property type="term" value="F:ATP binding"/>
    <property type="evidence" value="ECO:0007669"/>
    <property type="project" value="UniProtKB-KW"/>
</dbReference>
<dbReference type="GO" id="GO:0003682">
    <property type="term" value="F:chromatin binding"/>
    <property type="evidence" value="ECO:0000250"/>
    <property type="project" value="UniProtKB"/>
</dbReference>
<dbReference type="GO" id="GO:0004697">
    <property type="term" value="F:diacylglycerol-dependent serine/threonine kinase activity"/>
    <property type="evidence" value="ECO:0000266"/>
    <property type="project" value="RGD"/>
</dbReference>
<dbReference type="GO" id="GO:0042393">
    <property type="term" value="F:histone binding"/>
    <property type="evidence" value="ECO:0000250"/>
    <property type="project" value="UniProtKB"/>
</dbReference>
<dbReference type="GO" id="GO:0042826">
    <property type="term" value="F:histone deacetylase binding"/>
    <property type="evidence" value="ECO:0000250"/>
    <property type="project" value="UniProtKB"/>
</dbReference>
<dbReference type="GO" id="GO:0035402">
    <property type="term" value="F:histone H3T11 kinase activity"/>
    <property type="evidence" value="ECO:0000250"/>
    <property type="project" value="UniProtKB"/>
</dbReference>
<dbReference type="GO" id="GO:0050681">
    <property type="term" value="F:nuclear androgen receptor binding"/>
    <property type="evidence" value="ECO:0000250"/>
    <property type="project" value="UniProtKB"/>
</dbReference>
<dbReference type="GO" id="GO:0004672">
    <property type="term" value="F:protein kinase activity"/>
    <property type="evidence" value="ECO:0000314"/>
    <property type="project" value="RGD"/>
</dbReference>
<dbReference type="GO" id="GO:0005080">
    <property type="term" value="F:protein kinase C binding"/>
    <property type="evidence" value="ECO:0000266"/>
    <property type="project" value="RGD"/>
</dbReference>
<dbReference type="GO" id="GO:0106310">
    <property type="term" value="F:protein serine kinase activity"/>
    <property type="evidence" value="ECO:0007669"/>
    <property type="project" value="RHEA"/>
</dbReference>
<dbReference type="GO" id="GO:0004674">
    <property type="term" value="F:protein serine/threonine kinase activity"/>
    <property type="evidence" value="ECO:0000250"/>
    <property type="project" value="UniProtKB"/>
</dbReference>
<dbReference type="GO" id="GO:0031267">
    <property type="term" value="F:small GTPase binding"/>
    <property type="evidence" value="ECO:0000250"/>
    <property type="project" value="UniProtKB"/>
</dbReference>
<dbReference type="GO" id="GO:0003713">
    <property type="term" value="F:transcription coactivator activity"/>
    <property type="evidence" value="ECO:0000250"/>
    <property type="project" value="UniProtKB"/>
</dbReference>
<dbReference type="GO" id="GO:0001783">
    <property type="term" value="P:B cell apoptotic process"/>
    <property type="evidence" value="ECO:0000266"/>
    <property type="project" value="RGD"/>
</dbReference>
<dbReference type="GO" id="GO:0001782">
    <property type="term" value="P:B cell homeostasis"/>
    <property type="evidence" value="ECO:0000266"/>
    <property type="project" value="RGD"/>
</dbReference>
<dbReference type="GO" id="GO:0010631">
    <property type="term" value="P:epithelial cell migration"/>
    <property type="evidence" value="ECO:0000250"/>
    <property type="project" value="UniProtKB"/>
</dbReference>
<dbReference type="GO" id="GO:0006972">
    <property type="term" value="P:hyperosmotic response"/>
    <property type="evidence" value="ECO:0000266"/>
    <property type="project" value="RGD"/>
</dbReference>
<dbReference type="GO" id="GO:0035556">
    <property type="term" value="P:intracellular signal transduction"/>
    <property type="evidence" value="ECO:0000318"/>
    <property type="project" value="GO_Central"/>
</dbReference>
<dbReference type="GO" id="GO:0030889">
    <property type="term" value="P:negative regulation of B cell proliferation"/>
    <property type="evidence" value="ECO:0000266"/>
    <property type="project" value="RGD"/>
</dbReference>
<dbReference type="GO" id="GO:0043687">
    <property type="term" value="P:post-translational protein modification"/>
    <property type="evidence" value="ECO:0000250"/>
    <property type="project" value="UniProtKB"/>
</dbReference>
<dbReference type="GO" id="GO:2000145">
    <property type="term" value="P:regulation of cell motility"/>
    <property type="evidence" value="ECO:0000250"/>
    <property type="project" value="UniProtKB"/>
</dbReference>
<dbReference type="GO" id="GO:0002634">
    <property type="term" value="P:regulation of germinal center formation"/>
    <property type="evidence" value="ECO:0000266"/>
    <property type="project" value="RGD"/>
</dbReference>
<dbReference type="GO" id="GO:0002637">
    <property type="term" value="P:regulation of immunoglobulin production"/>
    <property type="evidence" value="ECO:0000266"/>
    <property type="project" value="RGD"/>
</dbReference>
<dbReference type="GO" id="GO:0006357">
    <property type="term" value="P:regulation of transcription by RNA polymerase II"/>
    <property type="evidence" value="ECO:0000250"/>
    <property type="project" value="UniProtKB"/>
</dbReference>
<dbReference type="GO" id="GO:0003014">
    <property type="term" value="P:renal system process"/>
    <property type="evidence" value="ECO:0000266"/>
    <property type="project" value="RGD"/>
</dbReference>
<dbReference type="GO" id="GO:0048536">
    <property type="term" value="P:spleen development"/>
    <property type="evidence" value="ECO:0000266"/>
    <property type="project" value="RGD"/>
</dbReference>
<dbReference type="CDD" id="cd08687">
    <property type="entry name" value="C2_PKN-like"/>
    <property type="match status" value="1"/>
</dbReference>
<dbReference type="CDD" id="cd11630">
    <property type="entry name" value="HR1_PKN1_2"/>
    <property type="match status" value="1"/>
</dbReference>
<dbReference type="CDD" id="cd11622">
    <property type="entry name" value="HR1_PKN_1"/>
    <property type="match status" value="1"/>
</dbReference>
<dbReference type="CDD" id="cd05589">
    <property type="entry name" value="STKc_PKN"/>
    <property type="match status" value="1"/>
</dbReference>
<dbReference type="FunFam" id="1.10.287.160:FF:000001">
    <property type="entry name" value="Putative serine/threonine-protein kinase N2"/>
    <property type="match status" value="1"/>
</dbReference>
<dbReference type="FunFam" id="1.10.287.160:FF:000002">
    <property type="entry name" value="Putative serine/threonine-protein kinase N2"/>
    <property type="match status" value="1"/>
</dbReference>
<dbReference type="FunFam" id="1.10.287.160:FF:000003">
    <property type="entry name" value="Putative serine/threonine-protein kinase N2"/>
    <property type="match status" value="1"/>
</dbReference>
<dbReference type="FunFam" id="3.30.200.20:FF:000058">
    <property type="entry name" value="Putative serine/threonine-protein kinase N2"/>
    <property type="match status" value="1"/>
</dbReference>
<dbReference type="FunFam" id="1.10.510.10:FF:000038">
    <property type="entry name" value="serine/threonine-protein kinase N2 isoform X1"/>
    <property type="match status" value="1"/>
</dbReference>
<dbReference type="Gene3D" id="1.10.287.160">
    <property type="entry name" value="HR1 repeat"/>
    <property type="match status" value="3"/>
</dbReference>
<dbReference type="Gene3D" id="3.30.200.20">
    <property type="entry name" value="Phosphorylase Kinase, domain 1"/>
    <property type="match status" value="1"/>
</dbReference>
<dbReference type="Gene3D" id="1.10.510.10">
    <property type="entry name" value="Transferase(Phosphotransferase) domain 1"/>
    <property type="match status" value="1"/>
</dbReference>
<dbReference type="InterPro" id="IPR000961">
    <property type="entry name" value="AGC-kinase_C"/>
</dbReference>
<dbReference type="InterPro" id="IPR000008">
    <property type="entry name" value="C2_dom"/>
</dbReference>
<dbReference type="InterPro" id="IPR035892">
    <property type="entry name" value="C2_domain_sf"/>
</dbReference>
<dbReference type="InterPro" id="IPR037784">
    <property type="entry name" value="C2_PKN"/>
</dbReference>
<dbReference type="InterPro" id="IPR011072">
    <property type="entry name" value="HR1_rho-bd"/>
</dbReference>
<dbReference type="InterPro" id="IPR036274">
    <property type="entry name" value="HR1_rpt_sf"/>
</dbReference>
<dbReference type="InterPro" id="IPR011009">
    <property type="entry name" value="Kinase-like_dom_sf"/>
</dbReference>
<dbReference type="InterPro" id="IPR017892">
    <property type="entry name" value="Pkinase_C"/>
</dbReference>
<dbReference type="InterPro" id="IPR037317">
    <property type="entry name" value="PKN1_HR1_2"/>
</dbReference>
<dbReference type="InterPro" id="IPR037313">
    <property type="entry name" value="PKN_HR1_1"/>
</dbReference>
<dbReference type="InterPro" id="IPR000719">
    <property type="entry name" value="Prot_kinase_dom"/>
</dbReference>
<dbReference type="InterPro" id="IPR017441">
    <property type="entry name" value="Protein_kinase_ATP_BS"/>
</dbReference>
<dbReference type="InterPro" id="IPR008271">
    <property type="entry name" value="Ser/Thr_kinase_AS"/>
</dbReference>
<dbReference type="PANTHER" id="PTHR24351">
    <property type="entry name" value="RIBOSOMAL PROTEIN S6 KINASE"/>
    <property type="match status" value="1"/>
</dbReference>
<dbReference type="Pfam" id="PF02185">
    <property type="entry name" value="HR1"/>
    <property type="match status" value="3"/>
</dbReference>
<dbReference type="Pfam" id="PF00069">
    <property type="entry name" value="Pkinase"/>
    <property type="match status" value="1"/>
</dbReference>
<dbReference type="Pfam" id="PF00433">
    <property type="entry name" value="Pkinase_C"/>
    <property type="match status" value="1"/>
</dbReference>
<dbReference type="SMART" id="SM00742">
    <property type="entry name" value="Hr1"/>
    <property type="match status" value="3"/>
</dbReference>
<dbReference type="SMART" id="SM00133">
    <property type="entry name" value="S_TK_X"/>
    <property type="match status" value="1"/>
</dbReference>
<dbReference type="SMART" id="SM00220">
    <property type="entry name" value="S_TKc"/>
    <property type="match status" value="1"/>
</dbReference>
<dbReference type="SUPFAM" id="SSF49562">
    <property type="entry name" value="C2 domain (Calcium/lipid-binding domain, CaLB)"/>
    <property type="match status" value="1"/>
</dbReference>
<dbReference type="SUPFAM" id="SSF46585">
    <property type="entry name" value="HR1 repeat"/>
    <property type="match status" value="3"/>
</dbReference>
<dbReference type="SUPFAM" id="SSF56112">
    <property type="entry name" value="Protein kinase-like (PK-like)"/>
    <property type="match status" value="1"/>
</dbReference>
<dbReference type="PROSITE" id="PS51285">
    <property type="entry name" value="AGC_KINASE_CTER"/>
    <property type="match status" value="1"/>
</dbReference>
<dbReference type="PROSITE" id="PS50004">
    <property type="entry name" value="C2"/>
    <property type="match status" value="1"/>
</dbReference>
<dbReference type="PROSITE" id="PS00107">
    <property type="entry name" value="PROTEIN_KINASE_ATP"/>
    <property type="match status" value="1"/>
</dbReference>
<dbReference type="PROSITE" id="PS50011">
    <property type="entry name" value="PROTEIN_KINASE_DOM"/>
    <property type="match status" value="1"/>
</dbReference>
<dbReference type="PROSITE" id="PS00108">
    <property type="entry name" value="PROTEIN_KINASE_ST"/>
    <property type="match status" value="1"/>
</dbReference>
<dbReference type="PROSITE" id="PS51860">
    <property type="entry name" value="REM_1"/>
    <property type="match status" value="3"/>
</dbReference>
<reference key="1">
    <citation type="journal article" date="1994" name="Biochem. Biophys. Res. Commun.">
        <title>A novel protein kinase with leucine zipper-like sequences: its catalytic domain is highly homologous to that of protein kinase C.</title>
        <authorList>
            <person name="Mukai H."/>
            <person name="Ono Y."/>
        </authorList>
    </citation>
    <scope>NUCLEOTIDE SEQUENCE [MRNA]</scope>
    <source>
        <tissue>Lung</tissue>
    </source>
</reference>
<reference key="2">
    <citation type="journal article" date="1996" name="J. Biol. Chem.">
        <title>Phosphorylation events associated with different states of activation of a hepatic cardiolipin/protease-activated protein kinase. Structural identity to the protein kinase N-type protein kinases.</title>
        <authorList>
            <person name="Peng B."/>
            <person name="Morrice N.A."/>
            <person name="Groenen L.C."/>
            <person name="Wettenhall R.E."/>
        </authorList>
    </citation>
    <scope>NUCLEOTIDE SEQUENCE [MRNA]</scope>
    <source>
        <strain>Sprague-Dawley</strain>
        <tissue>Liver</tissue>
    </source>
</reference>
<reference key="3">
    <citation type="journal article" date="2004" name="Genome Res.">
        <title>The status, quality, and expansion of the NIH full-length cDNA project: the Mammalian Gene Collection (MGC).</title>
        <authorList>
            <consortium name="The MGC Project Team"/>
        </authorList>
    </citation>
    <scope>NUCLEOTIDE SEQUENCE [LARGE SCALE MRNA]</scope>
    <source>
        <tissue>Prostate</tissue>
    </source>
</reference>
<reference key="4">
    <citation type="journal article" date="1994" name="J. Biol. Chem.">
        <title>A cardiolipin-activated protein kinase from rat liver structurally distinct from the protein kinases C.</title>
        <authorList>
            <person name="Morrice N.A."/>
            <person name="Gabrielli B."/>
            <person name="Kemp B.E."/>
            <person name="Wettenhall R.E."/>
        </authorList>
    </citation>
    <scope>PROTEIN SEQUENCE OF 633-648; 747-767; 776-822; 880-889 AND 938-946</scope>
    <scope>FUNCTION</scope>
    <scope>CATALYTIC ACTIVITY</scope>
    <source>
        <tissue>Liver</tissue>
    </source>
</reference>
<reference key="5">
    <citation type="journal article" date="2004" name="FASEB J.">
        <title>Signaling via a novel integral plasma membrane pool of a serine/threonine protein kinase PRK1 in mammalian cells.</title>
        <authorList>
            <person name="Zhu Y."/>
            <person name="Stolz D.B."/>
            <person name="Guo F."/>
            <person name="Ross M.A."/>
            <person name="Watkins S.C."/>
            <person name="Tan B.J."/>
            <person name="Qi R.Z."/>
            <person name="Manser E."/>
            <person name="Li Q.T."/>
            <person name="Bay B.H."/>
            <person name="Teo T.S."/>
            <person name="Duan W."/>
        </authorList>
    </citation>
    <scope>FUNCTION</scope>
    <scope>SUBCELLULAR LOCATION</scope>
    <scope>PHOSPHORYLATION AT SER-377</scope>
</reference>
<reference key="6">
    <citation type="journal article" date="2012" name="Nat. Commun.">
        <title>Quantitative maps of protein phosphorylation sites across 14 different rat organs and tissues.</title>
        <authorList>
            <person name="Lundby A."/>
            <person name="Secher A."/>
            <person name="Lage K."/>
            <person name="Nordsborg N.B."/>
            <person name="Dmytriyev A."/>
            <person name="Lundby C."/>
            <person name="Olsen J.V."/>
        </authorList>
    </citation>
    <scope>PHOSPHORYLATION [LARGE SCALE ANALYSIS] AT SER-920</scope>
    <scope>IDENTIFICATION BY MASS SPECTROMETRY [LARGE SCALE ANALYSIS]</scope>
</reference>
<accession>Q63433</accession>
<accession>Q6P748</accession>
<accession>Q8VIJ2</accession>
<keyword id="KW-0007">Acetylation</keyword>
<keyword id="KW-0067">ATP-binding</keyword>
<keyword id="KW-1003">Cell membrane</keyword>
<keyword id="KW-0156">Chromatin regulator</keyword>
<keyword id="KW-0175">Coiled coil</keyword>
<keyword id="KW-0963">Cytoplasm</keyword>
<keyword id="KW-0903">Direct protein sequencing</keyword>
<keyword id="KW-0967">Endosome</keyword>
<keyword id="KW-0418">Kinase</keyword>
<keyword id="KW-0472">Membrane</keyword>
<keyword id="KW-0547">Nucleotide-binding</keyword>
<keyword id="KW-0539">Nucleus</keyword>
<keyword id="KW-0597">Phosphoprotein</keyword>
<keyword id="KW-1185">Reference proteome</keyword>
<keyword id="KW-0677">Repeat</keyword>
<keyword id="KW-0723">Serine/threonine-protein kinase</keyword>
<keyword id="KW-0804">Transcription</keyword>
<keyword id="KW-0805">Transcription regulation</keyword>
<keyword id="KW-0808">Transferase</keyword>
<comment type="function">
    <text evidence="3 10 11">PKC-related serine/threonine-protein kinase involved in various processes such as regulation of the intermediate filaments of the actin cytoskeleton, cell migration, tumor cell invasion and transcription regulation (PubMed:15375078, PubMed:8051089). Part of a signaling cascade that begins with the activation of the adrenergic receptor ADRA1B and leads to the activation of MAPK14 (By similarity). Regulates the cytoskeletal network by phosphorylating proteins such as VIM and neurofilament proteins NEFH, NEFL and NEFM, leading to inhibit their polymerization. Phosphorylates 'Ser-575', 'Ser-637' and 'Ser-669' of MAPT/Tau, lowering its ability to bind to microtubules, resulting in disruption of tubulin assembly. Acts as a key coactivator of androgen receptor (ANDR)-dependent transcription, by being recruited to ANDR target genes and specifically mediating phosphorylation of 'Thr-11' of histone H3 (H3T11ph), a specific tag for epigenetic transcriptional activation that promotes demethylation of histone H3 'Lys-9' (H3K9me) by KDM4C/JMJD2C. Phosphorylates HDAC5, HDAC7 and HDAC9, leading to impair their import in the nucleus. Phosphorylates 'Thr-38' of PPP1R14A, 'Ser-159', 'Ser-163' and 'Ser-170' of MARCKS, and GFAP. Able to phosphorylate RPS6 in vitro (By similarity).</text>
</comment>
<comment type="catalytic activity">
    <reaction evidence="11">
        <text>L-seryl-[protein] + ATP = O-phospho-L-seryl-[protein] + ADP + H(+)</text>
        <dbReference type="Rhea" id="RHEA:17989"/>
        <dbReference type="Rhea" id="RHEA-COMP:9863"/>
        <dbReference type="Rhea" id="RHEA-COMP:11604"/>
        <dbReference type="ChEBI" id="CHEBI:15378"/>
        <dbReference type="ChEBI" id="CHEBI:29999"/>
        <dbReference type="ChEBI" id="CHEBI:30616"/>
        <dbReference type="ChEBI" id="CHEBI:83421"/>
        <dbReference type="ChEBI" id="CHEBI:456216"/>
        <dbReference type="EC" id="2.7.11.13"/>
    </reaction>
</comment>
<comment type="catalytic activity">
    <reaction evidence="11">
        <text>L-threonyl-[protein] + ATP = O-phospho-L-threonyl-[protein] + ADP + H(+)</text>
        <dbReference type="Rhea" id="RHEA:46608"/>
        <dbReference type="Rhea" id="RHEA-COMP:11060"/>
        <dbReference type="Rhea" id="RHEA-COMP:11605"/>
        <dbReference type="ChEBI" id="CHEBI:15378"/>
        <dbReference type="ChEBI" id="CHEBI:30013"/>
        <dbReference type="ChEBI" id="CHEBI:30616"/>
        <dbReference type="ChEBI" id="CHEBI:61977"/>
        <dbReference type="ChEBI" id="CHEBI:456216"/>
        <dbReference type="EC" id="2.7.11.13"/>
    </reaction>
</comment>
<comment type="activity regulation">
    <text evidence="1">Kinase activity is activated upon binding to Rho proteins (RHOA, RHOB and RAC1). Activated by lipids, particularly cardiolipin and to a lesser extent by other acidic phospholipids. Activated by caspase-3 (CASP3) cleavage during apoptosis. Two specific sites, Thr-778 (activation loop of the kinase domain) and Ser-920 (turn motif), need to be phosphorylated for its full activation (By similarity).</text>
</comment>
<comment type="subunit">
    <text evidence="2 3">Interacts with ZFAND6 (By similarity). Interacts with ANDR. Interacts with PRKCB. Interacts (via REM 1 and REM 2 repeats) with RAC1. Interacts (via REM 1 repeat) with RHOA. Interacts with RHOB. Interacts (via C-terminus) with PDPK1. Interacts with CCNT2; enhances MYOD1-dependent transcription. Component of a signaling complex containing at least AKAP13, PKN1, MAPK14, ZAK and MAP2K3. Within this complex, AKAP13 interacts directly with PKN1, which in turn recruits MAPK14, MAP2K3 and ZAK (By similarity).</text>
</comment>
<comment type="subcellular location">
    <subcellularLocation>
        <location evidence="10">Cytoplasm</location>
    </subcellularLocation>
    <subcellularLocation>
        <location evidence="3">Nucleus</location>
    </subcellularLocation>
    <subcellularLocation>
        <location evidence="3">Endosome</location>
    </subcellularLocation>
    <subcellularLocation>
        <location evidence="10">Cell membrane</location>
        <topology evidence="10">Peripheral membrane protein</topology>
    </subcellularLocation>
    <subcellularLocation>
        <location evidence="3">Cleavage furrow</location>
    </subcellularLocation>
    <subcellularLocation>
        <location evidence="3">Midbody</location>
    </subcellularLocation>
    <text evidence="3 10">Associates with chromatin in a ligand-dependent manner (By similarity). Localization to endosomes is mediated via its interaction with RHOB. Accumulates during telophase at the cleavage furrow and finally concentrates around the midbody in cytokinesis (By similarity). Association to the cell membrane is dependent on Ser-377 phosphorylation.</text>
</comment>
<comment type="domain">
    <text evidence="1">The C1 domain does not bind the diacylglycerol (DAG).</text>
</comment>
<comment type="PTM">
    <text evidence="3">Autophosphorylated; preferably on serine. Phosphorylated during mitosis.</text>
</comment>
<comment type="PTM">
    <text evidence="1">Activated by limited proteolysis with trypsin.</text>
</comment>
<comment type="similarity">
    <text evidence="12">Belongs to the protein kinase superfamily. AGC Ser/Thr protein kinase family. PKC subfamily.</text>
</comment>
<gene>
    <name type="primary">Pkn1</name>
    <name type="synonym">Pkn</name>
    <name type="synonym">Prk1</name>
    <name type="synonym">Prkcl1</name>
</gene>
<organism>
    <name type="scientific">Rattus norvegicus</name>
    <name type="common">Rat</name>
    <dbReference type="NCBI Taxonomy" id="10116"/>
    <lineage>
        <taxon>Eukaryota</taxon>
        <taxon>Metazoa</taxon>
        <taxon>Chordata</taxon>
        <taxon>Craniata</taxon>
        <taxon>Vertebrata</taxon>
        <taxon>Euteleostomi</taxon>
        <taxon>Mammalia</taxon>
        <taxon>Eutheria</taxon>
        <taxon>Euarchontoglires</taxon>
        <taxon>Glires</taxon>
        <taxon>Rodentia</taxon>
        <taxon>Myomorpha</taxon>
        <taxon>Muroidea</taxon>
        <taxon>Muridae</taxon>
        <taxon>Murinae</taxon>
        <taxon>Rattus</taxon>
    </lineage>
</organism>
<protein>
    <recommendedName>
        <fullName>Serine/threonine-protein kinase N1</fullName>
        <ecNumber evidence="11">2.7.11.13</ecNumber>
    </recommendedName>
    <alternativeName>
        <fullName>Protease-activated kinase 1</fullName>
        <shortName>PAK-1</shortName>
    </alternativeName>
    <alternativeName>
        <fullName>Protein kinase C-like 1</fullName>
    </alternativeName>
    <alternativeName>
        <fullName>Protein kinase C-like PKN</fullName>
    </alternativeName>
    <alternativeName>
        <fullName>Protein-kinase C-related kinase 1</fullName>
    </alternativeName>
    <alternativeName>
        <fullName>Serine-threonine protein kinase N</fullName>
    </alternativeName>
</protein>
<proteinExistence type="evidence at protein level"/>
<evidence type="ECO:0000250" key="1"/>
<evidence type="ECO:0000250" key="2">
    <source>
        <dbReference type="UniProtKB" id="P70268"/>
    </source>
</evidence>
<evidence type="ECO:0000250" key="3">
    <source>
        <dbReference type="UniProtKB" id="Q16512"/>
    </source>
</evidence>
<evidence type="ECO:0000255" key="4">
    <source>
        <dbReference type="PROSITE-ProRule" id="PRU00041"/>
    </source>
</evidence>
<evidence type="ECO:0000255" key="5">
    <source>
        <dbReference type="PROSITE-ProRule" id="PRU00159"/>
    </source>
</evidence>
<evidence type="ECO:0000255" key="6">
    <source>
        <dbReference type="PROSITE-ProRule" id="PRU00618"/>
    </source>
</evidence>
<evidence type="ECO:0000255" key="7">
    <source>
        <dbReference type="PROSITE-ProRule" id="PRU01207"/>
    </source>
</evidence>
<evidence type="ECO:0000255" key="8">
    <source>
        <dbReference type="PROSITE-ProRule" id="PRU10027"/>
    </source>
</evidence>
<evidence type="ECO:0000256" key="9">
    <source>
        <dbReference type="SAM" id="MobiDB-lite"/>
    </source>
</evidence>
<evidence type="ECO:0000269" key="10">
    <source>
    </source>
</evidence>
<evidence type="ECO:0000269" key="11">
    <source>
    </source>
</evidence>
<evidence type="ECO:0000305" key="12"/>
<evidence type="ECO:0007744" key="13">
    <source>
    </source>
</evidence>
<sequence>MAGDAVQSEPRSWSLLEQLGLAGADLAAPGVQQQLELERERLKREIRKELKLKEGAENLRRATTDLGRSLAPVELLLRGSARRLDLLHQQLQELHAHVVLPDPTAGSDAPQSLAEGSPVCSSTNLSRVAGLEKQLAIELKVKQGAENMIQTYSNGSTKDRKLLLTAQQMLQDSKTKIDIIRMQLRRALQALQAGQLESQAAPDEAHGDPDLGAVELRIEELRHHFRVEHAVAEGAKNVLRLLSAAKAPDRKAVSEAQEKLTESNQKLGLLRESLERRLGELPADHPKGRLLREELTAASSAAFSAILPGPFPATHYSTLSKPAPLTGTLEVRVVGCKNLPETIPWSPPPSVGASGTPDSRTPFLSRPARGLYNRSGSLSGRSSLKGEAENSTEVSTVLKLDNTVVGQTAWKPCGPNAWDQSFTLELERARELELAVFWRDQRGLCALKFLKLEDFLDNERHEVQLDMEPQGCLVAEVTFRNPIIERIPRLQRQKKIFSKQQGQTFQRARQMNIDVATWVRLLRRLIPNAVATGSFSPNASPGSEIRSTGDISMEKLNLGADSDSSSQKSPAGLPSTSCSLSSPTHESTTSPELPSETQETPGPGLCSPLRKSPLTLEDFKFLAVLGRGHFGKVLLSEFHSSGELFAIKALKKGDIVARDEVESLMCEKRILATVTRAGHPFLVNLFGCFQTPEHVCFVMEYSAGGDLMLHIHSDVFSEPRAVFYSACVVLGLQFLHEHKIVYRDLKLDNLLLDTEGYVKIADFGLCKEGMGYGDRTSTFCGTPEFLAPEVLTDTSYTRAVDWWGLGVLLYEMLVGESPFPGDDEEEVFDSIVNDEVRYPRFLSAEAIGIMRRLLRRNPERRLGSTERDAEDVKKQPFFRTLDWDALLARRLPPPFVPTLSGRTDVSNFDEEFTGEAPTLSPPRDARPLTAAEQAAFRDFDFVAGGY</sequence>
<name>PKN1_RAT</name>
<feature type="initiator methionine" description="Removed" evidence="3">
    <location>
        <position position="1"/>
    </location>
</feature>
<feature type="chain" id="PRO_0000055721" description="Serine/threonine-protein kinase N1">
    <location>
        <begin position="2"/>
        <end position="946"/>
    </location>
</feature>
<feature type="domain" description="REM-1 1" evidence="7">
    <location>
        <begin position="25"/>
        <end position="100"/>
    </location>
</feature>
<feature type="domain" description="REM-1 2" evidence="7">
    <location>
        <begin position="114"/>
        <end position="193"/>
    </location>
</feature>
<feature type="domain" description="REM-1 3" evidence="7">
    <location>
        <begin position="202"/>
        <end position="283"/>
    </location>
</feature>
<feature type="domain" description="C2" evidence="4">
    <location>
        <begin position="310"/>
        <end position="473"/>
    </location>
</feature>
<feature type="domain" description="Protein kinase" evidence="5">
    <location>
        <begin position="619"/>
        <end position="878"/>
    </location>
</feature>
<feature type="domain" description="AGC-kinase C-terminal" evidence="6">
    <location>
        <begin position="879"/>
        <end position="946"/>
    </location>
</feature>
<feature type="region of interest" description="Disordered" evidence="9">
    <location>
        <begin position="345"/>
        <end position="387"/>
    </location>
</feature>
<feature type="region of interest" description="Disordered" evidence="9">
    <location>
        <begin position="556"/>
        <end position="607"/>
    </location>
</feature>
<feature type="region of interest" description="Disordered" evidence="9">
    <location>
        <begin position="906"/>
        <end position="925"/>
    </location>
</feature>
<feature type="compositionally biased region" description="Low complexity" evidence="9">
    <location>
        <begin position="369"/>
        <end position="383"/>
    </location>
</feature>
<feature type="compositionally biased region" description="Low complexity" evidence="9">
    <location>
        <begin position="573"/>
        <end position="601"/>
    </location>
</feature>
<feature type="active site" description="Proton acceptor" evidence="5 8">
    <location>
        <position position="744"/>
    </location>
</feature>
<feature type="binding site" evidence="5">
    <location>
        <begin position="625"/>
        <end position="633"/>
    </location>
    <ligand>
        <name>ATP</name>
        <dbReference type="ChEBI" id="CHEBI:30616"/>
    </ligand>
</feature>
<feature type="binding site" evidence="5">
    <location>
        <position position="648"/>
    </location>
    <ligand>
        <name>ATP</name>
        <dbReference type="ChEBI" id="CHEBI:30616"/>
    </ligand>
</feature>
<feature type="site" description="Cleavage; by caspase-3" evidence="1">
    <location>
        <begin position="108"/>
        <end position="109"/>
    </location>
</feature>
<feature type="site" description="Cleavage; by caspase-3" evidence="1">
    <location>
        <begin position="457"/>
        <end position="458"/>
    </location>
</feature>
<feature type="site" description="Cleavage; by caspase-3" evidence="1">
    <location>
        <begin position="561"/>
        <end position="562"/>
    </location>
</feature>
<feature type="modified residue" description="N-acetylalanine" evidence="3">
    <location>
        <position position="2"/>
    </location>
</feature>
<feature type="modified residue" description="Phosphoserine" evidence="3">
    <location>
        <position position="69"/>
    </location>
</feature>
<feature type="modified residue" description="Phosphoserine" evidence="10">
    <location>
        <position position="377"/>
    </location>
</feature>
<feature type="modified residue" description="N6-acetyllysine" evidence="3">
    <location>
        <position position="451"/>
    </location>
</feature>
<feature type="modified residue" description="Phosphoserine" evidence="3">
    <location>
        <position position="536"/>
    </location>
</feature>
<feature type="modified residue" description="Phosphoserine" evidence="3">
    <location>
        <position position="540"/>
    </location>
</feature>
<feature type="modified residue" description="Phosphoserine" evidence="3">
    <location>
        <position position="543"/>
    </location>
</feature>
<feature type="modified residue" description="Phosphoserine" evidence="3">
    <location>
        <position position="562"/>
    </location>
</feature>
<feature type="modified residue" description="Phosphoserine" evidence="3">
    <location>
        <position position="565"/>
    </location>
</feature>
<feature type="modified residue" description="Phosphoserine" evidence="3">
    <location>
        <position position="612"/>
    </location>
</feature>
<feature type="modified residue" description="Phosphothreonine; by PDPK1" evidence="3">
    <location>
        <position position="778"/>
    </location>
</feature>
<feature type="modified residue" description="Phosphothreonine" evidence="3">
    <location>
        <position position="782"/>
    </location>
</feature>
<feature type="modified residue" description="Phosphothreonine" evidence="3">
    <location>
        <position position="918"/>
    </location>
</feature>
<feature type="modified residue" description="Phosphoserine" evidence="13">
    <location>
        <position position="920"/>
    </location>
</feature>
<feature type="sequence conflict" description="In Ref. 2; AAL31374." evidence="12" ref="2">
    <original>A</original>
    <variation>R</variation>
    <location>
        <position position="298"/>
    </location>
</feature>
<feature type="sequence conflict" description="In Ref. 1; BAA05168." evidence="12" ref="1">
    <original>Q</original>
    <variation>H</variation>
    <location>
        <position position="510"/>
    </location>
</feature>
<feature type="sequence conflict" description="In Ref. 2; AAL31374." evidence="12" ref="2">
    <original>L</original>
    <variation>V</variation>
    <location>
        <position position="650"/>
    </location>
</feature>
<feature type="sequence conflict" description="In Ref. 1; BAA05168." evidence="12" ref="1">
    <original>V</original>
    <variation>G</variation>
    <location>
        <position position="722"/>
    </location>
</feature>
<feature type="sequence conflict" description="In Ref. 1; BAA05168." evidence="12" ref="1">
    <original>L</original>
    <variation>F</variation>
    <location>
        <position position="808"/>
    </location>
</feature>